<feature type="initiator methionine" description="Removed" evidence="4">
    <location>
        <position position="1"/>
    </location>
</feature>
<feature type="chain" id="PRO_0000221556" description="Stonustoxin subunit beta" evidence="14">
    <location>
        <begin position="2"/>
        <end position="700"/>
    </location>
</feature>
<feature type="domain" description="B30.2/SPRY" evidence="2">
    <location>
        <begin position="506"/>
        <end position="700"/>
    </location>
</feature>
<feature type="region of interest" description="Structural MACPF/CDC pore-forming domain" evidence="1">
    <location>
        <begin position="2"/>
        <end position="264"/>
    </location>
</feature>
<feature type="region of interest" description="Structural FAT domain" evidence="1">
    <location>
        <begin position="265"/>
        <end position="384"/>
    </location>
</feature>
<feature type="region of interest" description="Thioredoxin (THX) domain" evidence="1">
    <location>
        <begin position="385"/>
        <end position="514"/>
    </location>
</feature>
<feature type="sequence conflict" description="In Ref. 4; AA sequence." evidence="12" ref="4">
    <original>W</original>
    <variation>V</variation>
    <location>
        <position position="35"/>
    </location>
</feature>
<feature type="sequence conflict" description="In Ref. 2." evidence="12" ref="2">
    <original>Y</original>
    <variation>P</variation>
    <location>
        <position position="506"/>
    </location>
</feature>
<feature type="strand" evidence="15">
    <location>
        <begin position="6"/>
        <end position="9"/>
    </location>
</feature>
<feature type="strand" evidence="15">
    <location>
        <begin position="47"/>
        <end position="58"/>
    </location>
</feature>
<feature type="helix" evidence="15">
    <location>
        <begin position="62"/>
        <end position="68"/>
    </location>
</feature>
<feature type="helix" evidence="15">
    <location>
        <begin position="73"/>
        <end position="80"/>
    </location>
</feature>
<feature type="helix" evidence="15">
    <location>
        <begin position="90"/>
        <end position="94"/>
    </location>
</feature>
<feature type="strand" evidence="15">
    <location>
        <begin position="104"/>
        <end position="116"/>
    </location>
</feature>
<feature type="strand" evidence="15">
    <location>
        <begin position="140"/>
        <end position="157"/>
    </location>
</feature>
<feature type="helix" evidence="15">
    <location>
        <begin position="165"/>
        <end position="178"/>
    </location>
</feature>
<feature type="helix" evidence="15">
    <location>
        <begin position="195"/>
        <end position="200"/>
    </location>
</feature>
<feature type="strand" evidence="15">
    <location>
        <begin position="203"/>
        <end position="211"/>
    </location>
</feature>
<feature type="helix" evidence="15">
    <location>
        <begin position="220"/>
        <end position="229"/>
    </location>
</feature>
<feature type="turn" evidence="15">
    <location>
        <begin position="230"/>
        <end position="232"/>
    </location>
</feature>
<feature type="strand" evidence="15">
    <location>
        <begin position="240"/>
        <end position="248"/>
    </location>
</feature>
<feature type="helix" evidence="15">
    <location>
        <begin position="265"/>
        <end position="289"/>
    </location>
</feature>
<feature type="helix" evidence="15">
    <location>
        <begin position="292"/>
        <end position="296"/>
    </location>
</feature>
<feature type="helix" evidence="15">
    <location>
        <begin position="298"/>
        <end position="327"/>
    </location>
</feature>
<feature type="helix" evidence="15">
    <location>
        <begin position="337"/>
        <end position="348"/>
    </location>
</feature>
<feature type="helix" evidence="15">
    <location>
        <begin position="353"/>
        <end position="378"/>
    </location>
</feature>
<feature type="helix" evidence="15">
    <location>
        <begin position="388"/>
        <end position="395"/>
    </location>
</feature>
<feature type="strand" evidence="15">
    <location>
        <begin position="401"/>
        <end position="408"/>
    </location>
</feature>
<feature type="helix" evidence="15">
    <location>
        <begin position="416"/>
        <end position="426"/>
    </location>
</feature>
<feature type="helix" evidence="15">
    <location>
        <begin position="439"/>
        <end position="441"/>
    </location>
</feature>
<feature type="helix" evidence="15">
    <location>
        <begin position="443"/>
        <end position="445"/>
    </location>
</feature>
<feature type="helix" evidence="15">
    <location>
        <begin position="448"/>
        <end position="466"/>
    </location>
</feature>
<feature type="strand" evidence="15">
    <location>
        <begin position="469"/>
        <end position="478"/>
    </location>
</feature>
<feature type="strand" evidence="15">
    <location>
        <begin position="486"/>
        <end position="493"/>
    </location>
</feature>
<feature type="strand" evidence="15">
    <location>
        <begin position="496"/>
        <end position="501"/>
    </location>
</feature>
<feature type="helix" evidence="15">
    <location>
        <begin position="510"/>
        <end position="512"/>
    </location>
</feature>
<feature type="helix" evidence="15">
    <location>
        <begin position="516"/>
        <end position="520"/>
    </location>
</feature>
<feature type="turn" evidence="15">
    <location>
        <begin position="530"/>
        <end position="532"/>
    </location>
</feature>
<feature type="strand" evidence="15">
    <location>
        <begin position="538"/>
        <end position="540"/>
    </location>
</feature>
<feature type="turn" evidence="15">
    <location>
        <begin position="541"/>
        <end position="544"/>
    </location>
</feature>
<feature type="strand" evidence="15">
    <location>
        <begin position="545"/>
        <end position="547"/>
    </location>
</feature>
<feature type="strand" evidence="15">
    <location>
        <begin position="562"/>
        <end position="564"/>
    </location>
</feature>
<feature type="strand" evidence="15">
    <location>
        <begin position="566"/>
        <end position="570"/>
    </location>
</feature>
<feature type="strand" evidence="15">
    <location>
        <begin position="575"/>
        <end position="583"/>
    </location>
</feature>
<feature type="strand" evidence="15">
    <location>
        <begin position="588"/>
        <end position="592"/>
    </location>
</feature>
<feature type="helix" evidence="15">
    <location>
        <begin position="603"/>
        <end position="605"/>
    </location>
</feature>
<feature type="strand" evidence="15">
    <location>
        <begin position="609"/>
        <end position="617"/>
    </location>
</feature>
<feature type="strand" evidence="15">
    <location>
        <begin position="625"/>
        <end position="628"/>
    </location>
</feature>
<feature type="strand" evidence="15">
    <location>
        <begin position="631"/>
        <end position="634"/>
    </location>
</feature>
<feature type="strand" evidence="15">
    <location>
        <begin position="638"/>
        <end position="641"/>
    </location>
</feature>
<feature type="strand" evidence="15">
    <location>
        <begin position="643"/>
        <end position="650"/>
    </location>
</feature>
<feature type="turn" evidence="15">
    <location>
        <begin position="651"/>
        <end position="654"/>
    </location>
</feature>
<feature type="strand" evidence="15">
    <location>
        <begin position="655"/>
        <end position="662"/>
    </location>
</feature>
<feature type="strand" evidence="15">
    <location>
        <begin position="665"/>
        <end position="673"/>
    </location>
</feature>
<feature type="strand" evidence="15">
    <location>
        <begin position="680"/>
        <end position="685"/>
    </location>
</feature>
<feature type="strand" evidence="15">
    <location>
        <begin position="696"/>
        <end position="699"/>
    </location>
</feature>
<protein>
    <recommendedName>
        <fullName evidence="11">Stonustoxin subunit beta</fullName>
        <shortName evidence="11">SNTX subunit beta</shortName>
    </recommendedName>
    <alternativeName>
        <fullName evidence="12">DELTA-synanceitoxin-Sh1b</fullName>
        <shortName evidence="12">DELTA-SYTX-Sh1b</shortName>
    </alternativeName>
    <alternativeName>
        <fullName evidence="10">Trachynilysin subunit beta</fullName>
        <shortName evidence="10">TLY subunit beta</shortName>
    </alternativeName>
</protein>
<evidence type="ECO:0000250" key="1">
    <source>
        <dbReference type="UniProtKB" id="Q98989"/>
    </source>
</evidence>
<evidence type="ECO:0000255" key="2">
    <source>
        <dbReference type="PROSITE-ProRule" id="PRU00548"/>
    </source>
</evidence>
<evidence type="ECO:0000269" key="3">
    <source>
    </source>
</evidence>
<evidence type="ECO:0000269" key="4">
    <source>
    </source>
</evidence>
<evidence type="ECO:0000269" key="5">
    <source>
    </source>
</evidence>
<evidence type="ECO:0000269" key="6">
    <source>
    </source>
</evidence>
<evidence type="ECO:0000269" key="7">
    <source>
    </source>
</evidence>
<evidence type="ECO:0000269" key="8">
    <source>
    </source>
</evidence>
<evidence type="ECO:0000269" key="9">
    <source>
    </source>
</evidence>
<evidence type="ECO:0000303" key="10">
    <source>
    </source>
</evidence>
<evidence type="ECO:0000303" key="11">
    <source>
    </source>
</evidence>
<evidence type="ECO:0000305" key="12"/>
<evidence type="ECO:0000305" key="13">
    <source>
    </source>
</evidence>
<evidence type="ECO:0000305" key="14">
    <source>
    </source>
</evidence>
<evidence type="ECO:0007829" key="15">
    <source>
        <dbReference type="PDB" id="4WVM"/>
    </source>
</evidence>
<comment type="function">
    <text evidence="3 4 5 6 8 9">This lethal (towards mammals) heterodimer induces hemolytic activities due to its ability to form pores in the cell membrane (PubMed:12177053, PubMed:1790672, PubMed:26627714, PubMed:9271089). The pore may be composed of 10 SNTX-alpha/beta heterodimers (PubMed:26627714). The toxin elicits potent hypotension which is endothelium-dependent and appears to be mediated by the nitric oxide pathway and activation of potassium channels (PubMed:11931843, PubMed:8310447). In addition, it displays edema-inducing activities, increases vascular permeability. It also shows myotoxic activities and interferes irreversibly with neuromuscular function (PubMed:8079369). It also induces irreversible platelet aggregation in rabbit or rat but not in human or mouse whole blood (PubMed:8533137). In addition, it has been observed to increase spontaneous quantal acetylcholine release from isolated frog cutaneous pectoris motor endings (PubMed:8921306).</text>
</comment>
<comment type="subunit">
    <text evidence="4 8 13">Heterodimer of alpha and beta subunits (PubMed:1790672, PubMed:8921306); non-covalently linked.</text>
</comment>
<comment type="subcellular location">
    <subcellularLocation>
        <location evidence="4 8">Secreted</location>
    </subcellularLocation>
    <text evidence="7">Secreted into the venom gland lumen (PubMed:8810331). The secretion is proved by the fact that the complete sequence shown in this entry is found in the venom gland's lumen, although no signal peptide has been found (PubMed:8810331). This protein may follow a novel secretion pathway (PubMed:8810331). It has been reported that venom-secreting cells of stonefishes do not possess Golgi apparatus and rough endoplasmic reticulum (PubMed:8810331).</text>
</comment>
<comment type="tissue specificity">
    <text evidence="14">Expressed by the venom gland.</text>
</comment>
<comment type="domain">
    <text evidence="13">The first domain (residues 2-265) is structurally homologous to the membrane attack complex-ferforin/cholesterol-dependent cytolysin (MACPF/CDC) pore-forming domain. It makes numerous contacts with the FAT domain and comprise essentially the core pore-forming machinery.</text>
</comment>
<comment type="domain">
    <text evidence="13">The second domain is structurally homologous to the focal adhesion-targeting (FAT) domain (266-385). It makes numerous in cis contacts with the MACPF/CDC domain (first domain) and the thioredoxin (THX) domain (third domain) as well as extensive in trans interactions at the SNTX-alpha/beta interface.</text>
</comment>
<comment type="domain">
    <text evidence="13">The third domain corresponds to the thioredoxin (THX) domain. It makes numerous contacts with the second domain (FAT domain). Since it lacks the canonical catalytic residues, it may only play a purely structural role.</text>
</comment>
<comment type="domain">
    <text evidence="13">The fourth domain corresponds to the B30.2/SPRY domain. This domain would be responsible for initial interaction with the cell surface through either lipid- or protein-mediated interactions.</text>
</comment>
<comment type="PTM">
    <text evidence="14">Intrachain disulfide bonds may be present in the heterodimer (PubMed:8810331).</text>
</comment>
<comment type="PTM">
    <text evidence="14">Not glycosylated.</text>
</comment>
<comment type="toxic dose">
    <text evidence="4">LD(50) of stonustoxin is 0.017 mg/kg by intravenous injection.</text>
</comment>
<comment type="similarity">
    <text evidence="12">Belongs to the SNTX/VTX toxin family.</text>
</comment>
<comment type="caution">
    <text evidence="12">The toxin name trachynilysin was given according to the species S.trachynis. This species has finally been reclassified as a synonym of S.horrida.</text>
</comment>
<reference key="1">
    <citation type="journal article" date="1996" name="J. Biol. Chem.">
        <title>Stonustoxin is a novel lethal factor from stonefish (Synanceja horrida) venom. cDNA cloning and characterization.</title>
        <authorList>
            <person name="Ghadessy F.J."/>
            <person name="Chen D."/>
            <person name="Kini R.M."/>
            <person name="Chung M.C.M."/>
            <person name="Jeyaseelan K."/>
            <person name="Khoo H.E."/>
            <person name="Yuen R."/>
        </authorList>
    </citation>
    <scope>NUCLEOTIDE SEQUENCE [MRNA]</scope>
    <source>
        <tissue>Venom gland</tissue>
    </source>
</reference>
<reference key="2">
    <citation type="journal article" date="1994" name="Toxicon">
        <title>A genomic region encoding stonefish (Synanceja horrida) stonustoxin beta-subunit contains an intron.</title>
        <authorList>
            <person name="Ghadessy F.J."/>
            <person name="Jeyaseelan K."/>
            <person name="Chung M.C.M."/>
            <person name="Khoo H.E."/>
            <person name="Yuen R."/>
        </authorList>
    </citation>
    <scope>NUCLEOTIDE SEQUENCE [MRNA] OF 14-507</scope>
</reference>
<reference key="3">
    <citation type="journal article" date="1991" name="Comp. Biochem. Physiol.">
        <title>Purification and partial characterization of stonustoxin (lethal factor) from Synanceja horrida venom.</title>
        <authorList>
            <person name="Poh C.H."/>
            <person name="Yuen R."/>
            <person name="Khoo H.E."/>
            <person name="Chung M."/>
            <person name="Gwee M."/>
            <person name="Gopalakrishnakone P."/>
        </authorList>
    </citation>
    <scope>PROTEIN SEQUENCE OF 2-40; 77-91; 105-110; 318-325; 484-492; 494-512 AND 622-631</scope>
    <scope>SUBCELLULAR LOCATION</scope>
    <scope>SUBUNIT</scope>
    <scope>FUNCTION</scope>
    <scope>TOXIC DOSE</scope>
    <source>
        <tissue>Venom</tissue>
    </source>
</reference>
<reference key="4">
    <citation type="journal article" date="1996" name="Eur. J. Neurosci.">
        <title>Selective depletion of clear synaptic vesicles and enhanced quantal transmitter release at frog motor nerve endings produced by trachynilysin, a protein toxin isolated from stonefish (Synanceia trachynis) venom.</title>
        <authorList>
            <person name="Colasante C."/>
            <person name="Meunier F.A."/>
            <person name="Kreger A.S."/>
            <person name="Molgo J."/>
        </authorList>
    </citation>
    <scope>PROTEIN SEQUENCE OF 2-38</scope>
    <scope>SUBCELLULAR LOCATION</scope>
    <scope>FUNCTION</scope>
    <scope>SUBUNIT</scope>
    <source>
        <tissue>Venom</tissue>
    </source>
</reference>
<reference key="5">
    <citation type="journal article" date="1993" name="Toxicon">
        <title>Stonustoxin: a highly potent endothelium-dependent vasorelaxant in the rat.</title>
        <authorList>
            <person name="Low K.S."/>
            <person name="Gwee M.C."/>
            <person name="Yuen R."/>
            <person name="Gopalakrishnakone P."/>
            <person name="Khoo H.E."/>
        </authorList>
    </citation>
    <scope>FUNCTION</scope>
</reference>
<reference key="6">
    <citation type="journal article" date="1994" name="Toxicon">
        <title>Stonustoxin: effects on neuromuscular function in vitro and in vivo.</title>
        <authorList>
            <person name="Low K.S."/>
            <person name="Gwee M.C."/>
            <person name="Yuen R."/>
            <person name="Gopalakrishnakone P."/>
            <person name="Khoo H.E."/>
        </authorList>
    </citation>
    <scope>FUNCTION IN NEUROMUSCULAR INHIBITION</scope>
</reference>
<reference key="7">
    <citation type="journal article" date="1995" name="Toxicon">
        <title>Effects of stonustoxin (lethal factor from Synanceja horrida venom) on platelet aggregation.</title>
        <authorList>
            <person name="Khoo H.E."/>
            <person name="Hon W.M."/>
            <person name="Lee S.H."/>
            <person name="Yuen R."/>
        </authorList>
    </citation>
    <scope>FUNCTION ON PLATELET AGGREGATION</scope>
</reference>
<reference key="8">
    <citation type="journal article" date="1997" name="Biochem. J.">
        <title>Haemolytic activity of stonustoxin from stonefish (Synanceja horrida) venom: pore formation and the role of cationic amino acid residues.</title>
        <authorList>
            <person name="Chen D."/>
            <person name="Kini R.M."/>
            <person name="Yuen R."/>
            <person name="Khoo H.E."/>
        </authorList>
    </citation>
    <scope>FUNCTION IN CYTOLYSIS</scope>
    <source>
        <tissue>Venom</tissue>
    </source>
</reference>
<reference key="9">
    <citation type="journal article" date="2002" name="Biochem. Pharmacol.">
        <title>Characterization of the mechanism underlying stonustoxin-mediated relaxant response in the rat aorta in vitro.</title>
        <authorList>
            <person name="Sung J.M."/>
            <person name="Low K.S."/>
            <person name="Khoo H.E."/>
        </authorList>
    </citation>
    <scope>FUNCTION</scope>
</reference>
<reference key="10">
    <citation type="journal article" date="2002" name="J. Biol. Chem.">
        <title>Trachynilysin, a neurosecretory protein isolated from stonefish (Synanceia trachynis) venom, forms nonselective pores in the membrane of NG108-15 cells.</title>
        <authorList>
            <person name="Ouanounou G."/>
            <person name="Malo M."/>
            <person name="Stinnakre J."/>
            <person name="Kreger A.S."/>
            <person name="Molgo J."/>
        </authorList>
    </citation>
    <scope>FUNCTION</scope>
</reference>
<reference key="11">
    <citation type="journal article" date="1999" name="J. Struct. Biol.">
        <title>Crystallization and preliminary crystallographic study of stonustoxin, a protein lethal factor isolated from the stonefish (Synanceja horrida) venom.</title>
        <authorList>
            <person name="Yew W.S."/>
            <person name="Kolatkar P.R."/>
            <person name="Kuhn P."/>
            <person name="Khoo H.E."/>
        </authorList>
    </citation>
    <scope>CRYSTALLIZATION</scope>
</reference>
<reference key="12">
    <citation type="journal article" date="2015" name="Proc. Natl. Acad. Sci. U.S.A.">
        <title>Stonefish toxin defines an ancient branch of the perforin-like superfamily.</title>
        <authorList>
            <person name="Ellisdon A.M."/>
            <person name="Reboul C.F."/>
            <person name="Panjikar S."/>
            <person name="Huynh K."/>
            <person name="Oellig C.A."/>
            <person name="Winter K.L."/>
            <person name="Dunstone M.A."/>
            <person name="Hodgson W.C."/>
            <person name="Seymour J."/>
            <person name="Dearden P.K."/>
            <person name="Tweten R.K."/>
            <person name="Whisstock J.C."/>
            <person name="McGowan S."/>
        </authorList>
    </citation>
    <scope>X-RAY CRYSTALLOGRAPHY (3.1 ANGSTROMS) OF 1-700 IN COMPLEX WITH SUBUNIT A</scope>
    <scope>FUNCTION AS PORE-FORMING TOXIN</scope>
    <scope>MODEL OF PREPORE FORMATION</scope>
</reference>
<name>STXB_SYNHO</name>
<sequence length="700" mass="79425">MPSDILVVAALGRPFTLGMLYDARNDKLIPGFTLWEDEVIEESTLESSQPSSAFEIIASDSTDDKSSLMDIEASLKASFLGGLVEVGGSAKYLNNQKKFKNQSRVTLQYKATTSFKQLMTNLGTKHVEYSELFENIQATHVVIGILYGANAFFVFDSNKVDSTNVQEIQGQMEAVIKKIPSVEISGKASVQLTGEETDITNSFSCEFHGDFFLTTNPTTFEDAVKTYQQLPQMMGKDNAVPMTVWLVPMVNFYSEAPQLMADSSTPILRKVRNTLEAIVQVQMRCNDALDDPTVNLFTEVQKKLSDFQKICDDHMSKLQATIAKKLFAIRSGDEDESALLNLFEENLQSPFNIESLNMWMEFEEREINVLRSCMDILTKAKPKVIFNQGVLFKGLYDSKVKHALCYVFTNVTKNDVFLNVLNEFLDSPQSRPKKLRPSPKDYWYSYDDIPETMREKAYLFRNLAKEMNNRCVHFFVTAIHNPKQEGAGIHYYRESIQIIDEFTKPYMPGVESIKDRRELQWYDCELTLDPETAHQVLTLSEGNKKAVSGNTKSPTDHLEKFSHFQQVMCTKGLSGRHYWELEWSGYVGAGVTYKGIGRKTSTSDSSLGKNEKSWLFEYSTKSGYQQIHNSKKTRVTVSSTGFKLLGVYLDWPAGTLSFYMVNKAWVTHLHTFHTKFNEAVYPAFLIGDAQQKVNGQIKLL</sequence>
<organism>
    <name type="scientific">Synanceia horrida</name>
    <name type="common">Estuarine stonefish</name>
    <name type="synonym">Scorpaena horrida</name>
    <dbReference type="NCBI Taxonomy" id="13279"/>
    <lineage>
        <taxon>Eukaryota</taxon>
        <taxon>Metazoa</taxon>
        <taxon>Chordata</taxon>
        <taxon>Craniata</taxon>
        <taxon>Vertebrata</taxon>
        <taxon>Euteleostomi</taxon>
        <taxon>Actinopterygii</taxon>
        <taxon>Neopterygii</taxon>
        <taxon>Teleostei</taxon>
        <taxon>Neoteleostei</taxon>
        <taxon>Acanthomorphata</taxon>
        <taxon>Eupercaria</taxon>
        <taxon>Perciformes</taxon>
        <taxon>Scorpaenoidei</taxon>
        <taxon>Synanceiidae</taxon>
        <taxon>Synanceiinae</taxon>
        <taxon>Synanceia</taxon>
    </lineage>
</organism>
<accession>Q91453</accession>
<accession>Q98986</accession>
<proteinExistence type="evidence at protein level"/>
<dbReference type="EMBL" id="U32516">
    <property type="protein sequence ID" value="AAC60021.1"/>
    <property type="molecule type" value="mRNA"/>
</dbReference>
<dbReference type="PIR" id="I51333">
    <property type="entry name" value="A61527"/>
</dbReference>
<dbReference type="PDB" id="4WVM">
    <property type="method" value="X-ray"/>
    <property type="resolution" value="3.10 A"/>
    <property type="chains" value="B=1-700"/>
</dbReference>
<dbReference type="PDBsum" id="4WVM"/>
<dbReference type="SMR" id="Q91453"/>
<dbReference type="TCDB" id="1.C.125.1.1">
    <property type="family name" value="the pore-forming stonustoxin (stonustoxin) family"/>
</dbReference>
<dbReference type="GO" id="GO:0005576">
    <property type="term" value="C:extracellular region"/>
    <property type="evidence" value="ECO:0007669"/>
    <property type="project" value="UniProtKB-SubCell"/>
</dbReference>
<dbReference type="GO" id="GO:0015459">
    <property type="term" value="F:potassium channel regulator activity"/>
    <property type="evidence" value="ECO:0007669"/>
    <property type="project" value="UniProtKB-KW"/>
</dbReference>
<dbReference type="GO" id="GO:0090729">
    <property type="term" value="F:toxin activity"/>
    <property type="evidence" value="ECO:0007669"/>
    <property type="project" value="UniProtKB-KW"/>
</dbReference>
<dbReference type="GO" id="GO:0031640">
    <property type="term" value="P:killing of cells of another organism"/>
    <property type="evidence" value="ECO:0007669"/>
    <property type="project" value="UniProtKB-KW"/>
</dbReference>
<dbReference type="CDD" id="cd16040">
    <property type="entry name" value="SPRY_PRY_SNTX"/>
    <property type="match status" value="1"/>
</dbReference>
<dbReference type="Gene3D" id="2.60.120.920">
    <property type="match status" value="1"/>
</dbReference>
<dbReference type="InterPro" id="IPR001870">
    <property type="entry name" value="B30.2/SPRY"/>
</dbReference>
<dbReference type="InterPro" id="IPR043136">
    <property type="entry name" value="B30.2/SPRY_sf"/>
</dbReference>
<dbReference type="InterPro" id="IPR003879">
    <property type="entry name" value="Butyrophylin_SPRY"/>
</dbReference>
<dbReference type="InterPro" id="IPR013320">
    <property type="entry name" value="ConA-like_dom_sf"/>
</dbReference>
<dbReference type="InterPro" id="IPR052090">
    <property type="entry name" value="Cytolytic_pore-forming_toxin"/>
</dbReference>
<dbReference type="InterPro" id="IPR006574">
    <property type="entry name" value="PRY"/>
</dbReference>
<dbReference type="InterPro" id="IPR056072">
    <property type="entry name" value="SNTX_MACPF/CDC-like_dom"/>
</dbReference>
<dbReference type="InterPro" id="IPR003877">
    <property type="entry name" value="SPRY_dom"/>
</dbReference>
<dbReference type="InterPro" id="IPR048997">
    <property type="entry name" value="Stonustoxin-like_helical"/>
</dbReference>
<dbReference type="InterPro" id="IPR040581">
    <property type="entry name" value="Thioredoxin_11"/>
</dbReference>
<dbReference type="PANTHER" id="PTHR31594">
    <property type="entry name" value="AIG1-TYPE G DOMAIN-CONTAINING PROTEIN"/>
    <property type="match status" value="1"/>
</dbReference>
<dbReference type="PANTHER" id="PTHR31594:SF16">
    <property type="entry name" value="SI:CH211-281L24.3"/>
    <property type="match status" value="1"/>
</dbReference>
<dbReference type="Pfam" id="PF24674">
    <property type="entry name" value="MACPF_SNTX"/>
    <property type="match status" value="1"/>
</dbReference>
<dbReference type="Pfam" id="PF13765">
    <property type="entry name" value="PRY"/>
    <property type="match status" value="1"/>
</dbReference>
<dbReference type="Pfam" id="PF00622">
    <property type="entry name" value="SPRY"/>
    <property type="match status" value="1"/>
</dbReference>
<dbReference type="Pfam" id="PF21109">
    <property type="entry name" value="Stonustoxin_helical"/>
    <property type="match status" value="1"/>
</dbReference>
<dbReference type="Pfam" id="PF18078">
    <property type="entry name" value="Thioredoxin_11"/>
    <property type="match status" value="1"/>
</dbReference>
<dbReference type="PRINTS" id="PR01407">
    <property type="entry name" value="BUTYPHLNCDUF"/>
</dbReference>
<dbReference type="SMART" id="SM00589">
    <property type="entry name" value="PRY"/>
    <property type="match status" value="1"/>
</dbReference>
<dbReference type="SMART" id="SM00449">
    <property type="entry name" value="SPRY"/>
    <property type="match status" value="1"/>
</dbReference>
<dbReference type="SUPFAM" id="SSF49899">
    <property type="entry name" value="Concanavalin A-like lectins/glucanases"/>
    <property type="match status" value="1"/>
</dbReference>
<dbReference type="PROSITE" id="PS50188">
    <property type="entry name" value="B302_SPRY"/>
    <property type="match status" value="1"/>
</dbReference>
<keyword id="KW-0002">3D-structure</keyword>
<keyword id="KW-0204">Cytolysis</keyword>
<keyword id="KW-0903">Direct protein sequencing</keyword>
<keyword id="KW-1015">Disulfide bond</keyword>
<keyword id="KW-0354">Hemolysis</keyword>
<keyword id="KW-0872">Ion channel impairing toxin</keyword>
<keyword id="KW-0959">Myotoxin</keyword>
<keyword id="KW-0528">Neurotoxin</keyword>
<keyword id="KW-0632">Potassium channel impairing toxin</keyword>
<keyword id="KW-0964">Secreted</keyword>
<keyword id="KW-0800">Toxin</keyword>